<dbReference type="EC" id="3.4.11.4" evidence="1"/>
<dbReference type="EMBL" id="CP000817">
    <property type="protein sequence ID" value="ACA38448.1"/>
    <property type="molecule type" value="Genomic_DNA"/>
</dbReference>
<dbReference type="RefSeq" id="WP_012292598.1">
    <property type="nucleotide sequence ID" value="NC_010382.1"/>
</dbReference>
<dbReference type="SMR" id="B1HZ48"/>
<dbReference type="MEROPS" id="M20.003"/>
<dbReference type="EnsemblBacteria" id="ACA38448">
    <property type="protein sequence ID" value="ACA38448"/>
    <property type="gene ID" value="Bsph_0832"/>
</dbReference>
<dbReference type="KEGG" id="lsp:Bsph_0832"/>
<dbReference type="HOGENOM" id="CLU_053676_0_0_9"/>
<dbReference type="Proteomes" id="UP000002164">
    <property type="component" value="Chromosome"/>
</dbReference>
<dbReference type="GO" id="GO:0005829">
    <property type="term" value="C:cytosol"/>
    <property type="evidence" value="ECO:0007669"/>
    <property type="project" value="TreeGrafter"/>
</dbReference>
<dbReference type="GO" id="GO:0008237">
    <property type="term" value="F:metallopeptidase activity"/>
    <property type="evidence" value="ECO:0007669"/>
    <property type="project" value="UniProtKB-KW"/>
</dbReference>
<dbReference type="GO" id="GO:0045148">
    <property type="term" value="F:tripeptide aminopeptidase activity"/>
    <property type="evidence" value="ECO:0007669"/>
    <property type="project" value="UniProtKB-UniRule"/>
</dbReference>
<dbReference type="GO" id="GO:0008270">
    <property type="term" value="F:zinc ion binding"/>
    <property type="evidence" value="ECO:0007669"/>
    <property type="project" value="UniProtKB-UniRule"/>
</dbReference>
<dbReference type="GO" id="GO:0043171">
    <property type="term" value="P:peptide catabolic process"/>
    <property type="evidence" value="ECO:0007669"/>
    <property type="project" value="UniProtKB-UniRule"/>
</dbReference>
<dbReference type="GO" id="GO:0006508">
    <property type="term" value="P:proteolysis"/>
    <property type="evidence" value="ECO:0007669"/>
    <property type="project" value="UniProtKB-UniRule"/>
</dbReference>
<dbReference type="CDD" id="cd03892">
    <property type="entry name" value="M20_peptT"/>
    <property type="match status" value="1"/>
</dbReference>
<dbReference type="FunFam" id="3.30.70.360:FF:000002">
    <property type="entry name" value="Peptidase T"/>
    <property type="match status" value="1"/>
</dbReference>
<dbReference type="Gene3D" id="3.30.70.360">
    <property type="match status" value="1"/>
</dbReference>
<dbReference type="Gene3D" id="3.40.630.10">
    <property type="entry name" value="Zn peptidases"/>
    <property type="match status" value="1"/>
</dbReference>
<dbReference type="HAMAP" id="MF_00550">
    <property type="entry name" value="Aminopeptidase_M20"/>
    <property type="match status" value="1"/>
</dbReference>
<dbReference type="InterPro" id="IPR001261">
    <property type="entry name" value="ArgE/DapE_CS"/>
</dbReference>
<dbReference type="InterPro" id="IPR036264">
    <property type="entry name" value="Bact_exopeptidase_dim_dom"/>
</dbReference>
<dbReference type="InterPro" id="IPR002933">
    <property type="entry name" value="Peptidase_M20"/>
</dbReference>
<dbReference type="InterPro" id="IPR011650">
    <property type="entry name" value="Peptidase_M20_dimer"/>
</dbReference>
<dbReference type="InterPro" id="IPR010161">
    <property type="entry name" value="Peptidase_M20B"/>
</dbReference>
<dbReference type="NCBIfam" id="TIGR01882">
    <property type="entry name" value="peptidase-T"/>
    <property type="match status" value="1"/>
</dbReference>
<dbReference type="NCBIfam" id="NF003976">
    <property type="entry name" value="PRK05469.1"/>
    <property type="match status" value="1"/>
</dbReference>
<dbReference type="NCBIfam" id="NF009920">
    <property type="entry name" value="PRK13381.1"/>
    <property type="match status" value="1"/>
</dbReference>
<dbReference type="PANTHER" id="PTHR42994">
    <property type="entry name" value="PEPTIDASE T"/>
    <property type="match status" value="1"/>
</dbReference>
<dbReference type="PANTHER" id="PTHR42994:SF1">
    <property type="entry name" value="PEPTIDASE T"/>
    <property type="match status" value="1"/>
</dbReference>
<dbReference type="Pfam" id="PF07687">
    <property type="entry name" value="M20_dimer"/>
    <property type="match status" value="1"/>
</dbReference>
<dbReference type="Pfam" id="PF01546">
    <property type="entry name" value="Peptidase_M20"/>
    <property type="match status" value="1"/>
</dbReference>
<dbReference type="PIRSF" id="PIRSF037215">
    <property type="entry name" value="Peptidase_M20B"/>
    <property type="match status" value="1"/>
</dbReference>
<dbReference type="SUPFAM" id="SSF55031">
    <property type="entry name" value="Bacterial exopeptidase dimerisation domain"/>
    <property type="match status" value="1"/>
</dbReference>
<dbReference type="SUPFAM" id="SSF53187">
    <property type="entry name" value="Zn-dependent exopeptidases"/>
    <property type="match status" value="1"/>
</dbReference>
<dbReference type="PROSITE" id="PS00758">
    <property type="entry name" value="ARGE_DAPE_CPG2_1"/>
    <property type="match status" value="1"/>
</dbReference>
<dbReference type="PROSITE" id="PS00759">
    <property type="entry name" value="ARGE_DAPE_CPG2_2"/>
    <property type="match status" value="1"/>
</dbReference>
<feature type="chain" id="PRO_1000129036" description="Peptidase T">
    <location>
        <begin position="1"/>
        <end position="409"/>
    </location>
</feature>
<feature type="active site" evidence="1">
    <location>
        <position position="81"/>
    </location>
</feature>
<feature type="active site" description="Proton acceptor" evidence="1">
    <location>
        <position position="174"/>
    </location>
</feature>
<feature type="binding site" evidence="1">
    <location>
        <position position="79"/>
    </location>
    <ligand>
        <name>Zn(2+)</name>
        <dbReference type="ChEBI" id="CHEBI:29105"/>
        <label>1</label>
    </ligand>
</feature>
<feature type="binding site" evidence="1">
    <location>
        <position position="140"/>
    </location>
    <ligand>
        <name>Zn(2+)</name>
        <dbReference type="ChEBI" id="CHEBI:29105"/>
        <label>1</label>
    </ligand>
</feature>
<feature type="binding site" evidence="1">
    <location>
        <position position="140"/>
    </location>
    <ligand>
        <name>Zn(2+)</name>
        <dbReference type="ChEBI" id="CHEBI:29105"/>
        <label>2</label>
    </ligand>
</feature>
<feature type="binding site" evidence="1">
    <location>
        <position position="175"/>
    </location>
    <ligand>
        <name>Zn(2+)</name>
        <dbReference type="ChEBI" id="CHEBI:29105"/>
        <label>2</label>
    </ligand>
</feature>
<feature type="binding site" evidence="1">
    <location>
        <position position="197"/>
    </location>
    <ligand>
        <name>Zn(2+)</name>
        <dbReference type="ChEBI" id="CHEBI:29105"/>
        <label>1</label>
    </ligand>
</feature>
<feature type="binding site" evidence="1">
    <location>
        <position position="379"/>
    </location>
    <ligand>
        <name>Zn(2+)</name>
        <dbReference type="ChEBI" id="CHEBI:29105"/>
        <label>2</label>
    </ligand>
</feature>
<protein>
    <recommendedName>
        <fullName evidence="1">Peptidase T</fullName>
        <ecNumber evidence="1">3.4.11.4</ecNumber>
    </recommendedName>
    <alternativeName>
        <fullName evidence="1">Aminotripeptidase</fullName>
        <shortName evidence="1">Tripeptidase</shortName>
    </alternativeName>
    <alternativeName>
        <fullName evidence="1">Tripeptide aminopeptidase</fullName>
    </alternativeName>
</protein>
<proteinExistence type="inferred from homology"/>
<comment type="function">
    <text evidence="1">Cleaves the N-terminal amino acid of tripeptides.</text>
</comment>
<comment type="catalytic activity">
    <reaction evidence="1">
        <text>Release of the N-terminal residue from a tripeptide.</text>
        <dbReference type="EC" id="3.4.11.4"/>
    </reaction>
</comment>
<comment type="cofactor">
    <cofactor evidence="1">
        <name>Zn(2+)</name>
        <dbReference type="ChEBI" id="CHEBI:29105"/>
    </cofactor>
    <text evidence="1">Binds 2 Zn(2+) ions per subunit.</text>
</comment>
<comment type="subcellular location">
    <subcellularLocation>
        <location evidence="1">Cytoplasm</location>
    </subcellularLocation>
</comment>
<comment type="similarity">
    <text evidence="1">Belongs to the peptidase M20B family.</text>
</comment>
<name>PEPT_LYSSC</name>
<gene>
    <name evidence="1" type="primary">pepT</name>
    <name type="ordered locus">Bsph_0832</name>
</gene>
<evidence type="ECO:0000255" key="1">
    <source>
        <dbReference type="HAMAP-Rule" id="MF_00550"/>
    </source>
</evidence>
<reference key="1">
    <citation type="journal article" date="2008" name="J. Bacteriol.">
        <title>Complete genome sequence of the mosquitocidal bacterium Bacillus sphaericus C3-41 and comparison with those of closely related Bacillus species.</title>
        <authorList>
            <person name="Hu X."/>
            <person name="Fan W."/>
            <person name="Han B."/>
            <person name="Liu H."/>
            <person name="Zheng D."/>
            <person name="Li Q."/>
            <person name="Dong W."/>
            <person name="Yan J."/>
            <person name="Gao M."/>
            <person name="Berry C."/>
            <person name="Yuan Z."/>
        </authorList>
    </citation>
    <scope>NUCLEOTIDE SEQUENCE [LARGE SCALE GENOMIC DNA]</scope>
    <source>
        <strain>C3-41</strain>
    </source>
</reference>
<keyword id="KW-0031">Aminopeptidase</keyword>
<keyword id="KW-0963">Cytoplasm</keyword>
<keyword id="KW-0378">Hydrolase</keyword>
<keyword id="KW-0479">Metal-binding</keyword>
<keyword id="KW-0482">Metalloprotease</keyword>
<keyword id="KW-0645">Protease</keyword>
<keyword id="KW-0862">Zinc</keyword>
<sequence>MKEQVIERLIRYAKIDTQSDFTSETTPSTPKQFDLLHVLKDELATIGLTDITLDENGYLFATLEANTDKDVPTIGFLAHVDTTTDFTGTNVNPQRLDNYDGGDIQLNENLVMSPADFPELQNYIGQTLITTDGTTLLGADDKAGIAEIITAMEYLIQNPSIKHGKLRVAFTPDEEIGRGPHKFDVAAFGADYAYTMDGGPLGELQYESFNAAGVKVITKGTSVHPGSAKNKMVNAITMAIAFQNEMPTEAVPEKTEGYEGFIHLMGFKGAIEHAELSYIVRDHDRQKFEEKKQLMQAAAAKIQAQFGEDALSITIEDQYYNMGEKIEPVKEIVDIAREAMEKLDITPITLPIRGGTDGSQLSYMGLPTPNIFAGGENMHGKFEYVSAETMEKATQVIIEIVQLFEQRAK</sequence>
<accession>B1HZ48</accession>
<organism>
    <name type="scientific">Lysinibacillus sphaericus (strain C3-41)</name>
    <dbReference type="NCBI Taxonomy" id="444177"/>
    <lineage>
        <taxon>Bacteria</taxon>
        <taxon>Bacillati</taxon>
        <taxon>Bacillota</taxon>
        <taxon>Bacilli</taxon>
        <taxon>Bacillales</taxon>
        <taxon>Bacillaceae</taxon>
        <taxon>Lysinibacillus</taxon>
    </lineage>
</organism>